<sequence length="173" mass="19779">MIAQEREARINGEITAKEVRLISESGEQLGVVSVREALAMAEGQDVDLVEISPTAKPPVCKLMDYGKYKYQQAKKRDEAKKNQKQVQIKEIKFRPGTDEGDYQIKMRNINRFLADGDKVKVTLRFRGREMAHQQLGAQLLERVKEDLAEVAQIESFPKMEGRQMVMMIAPKKK</sequence>
<name>IF3_NEIG1</name>
<keyword id="KW-0963">Cytoplasm</keyword>
<keyword id="KW-0396">Initiation factor</keyword>
<keyword id="KW-0648">Protein biosynthesis</keyword>
<keyword id="KW-1185">Reference proteome</keyword>
<gene>
    <name evidence="1" type="primary">infC</name>
    <name type="ordered locus">NGO_0296</name>
</gene>
<feature type="chain" id="PRO_1000004546" description="Translation initiation factor IF-3">
    <location>
        <begin position="1"/>
        <end position="173"/>
    </location>
</feature>
<organism>
    <name type="scientific">Neisseria gonorrhoeae (strain ATCC 700825 / FA 1090)</name>
    <dbReference type="NCBI Taxonomy" id="242231"/>
    <lineage>
        <taxon>Bacteria</taxon>
        <taxon>Pseudomonadati</taxon>
        <taxon>Pseudomonadota</taxon>
        <taxon>Betaproteobacteria</taxon>
        <taxon>Neisseriales</taxon>
        <taxon>Neisseriaceae</taxon>
        <taxon>Neisseria</taxon>
    </lineage>
</organism>
<proteinExistence type="inferred from homology"/>
<reference key="1">
    <citation type="submission" date="2003-03" db="EMBL/GenBank/DDBJ databases">
        <title>The complete genome sequence of Neisseria gonorrhoeae.</title>
        <authorList>
            <person name="Lewis L.A."/>
            <person name="Gillaspy A.F."/>
            <person name="McLaughlin R.E."/>
            <person name="Gipson M."/>
            <person name="Ducey T.F."/>
            <person name="Ownbey T."/>
            <person name="Hartman K."/>
            <person name="Nydick C."/>
            <person name="Carson M.B."/>
            <person name="Vaughn J."/>
            <person name="Thomson C."/>
            <person name="Song L."/>
            <person name="Lin S."/>
            <person name="Yuan X."/>
            <person name="Najar F."/>
            <person name="Zhan M."/>
            <person name="Ren Q."/>
            <person name="Zhu H."/>
            <person name="Qi S."/>
            <person name="Kenton S.M."/>
            <person name="Lai H."/>
            <person name="White J.D."/>
            <person name="Clifton S."/>
            <person name="Roe B.A."/>
            <person name="Dyer D.W."/>
        </authorList>
    </citation>
    <scope>NUCLEOTIDE SEQUENCE [LARGE SCALE GENOMIC DNA]</scope>
    <source>
        <strain>ATCC 700825 / FA 1090</strain>
    </source>
</reference>
<dbReference type="EMBL" id="AE004969">
    <property type="protein sequence ID" value="AAW89044.1"/>
    <property type="molecule type" value="Genomic_DNA"/>
</dbReference>
<dbReference type="RefSeq" id="WP_010951024.1">
    <property type="nucleotide sequence ID" value="NC_002946.2"/>
</dbReference>
<dbReference type="RefSeq" id="YP_207456.1">
    <property type="nucleotide sequence ID" value="NC_002946.2"/>
</dbReference>
<dbReference type="SMR" id="Q5F9U3"/>
<dbReference type="STRING" id="242231.NGO_0296"/>
<dbReference type="GeneID" id="93386453"/>
<dbReference type="KEGG" id="ngo:NGO_0296"/>
<dbReference type="PATRIC" id="fig|242231.10.peg.367"/>
<dbReference type="HOGENOM" id="CLU_054919_3_2_4"/>
<dbReference type="Proteomes" id="UP000000535">
    <property type="component" value="Chromosome"/>
</dbReference>
<dbReference type="GO" id="GO:0005829">
    <property type="term" value="C:cytosol"/>
    <property type="evidence" value="ECO:0007669"/>
    <property type="project" value="TreeGrafter"/>
</dbReference>
<dbReference type="GO" id="GO:0016020">
    <property type="term" value="C:membrane"/>
    <property type="evidence" value="ECO:0007669"/>
    <property type="project" value="TreeGrafter"/>
</dbReference>
<dbReference type="GO" id="GO:0043022">
    <property type="term" value="F:ribosome binding"/>
    <property type="evidence" value="ECO:0007669"/>
    <property type="project" value="TreeGrafter"/>
</dbReference>
<dbReference type="GO" id="GO:0003743">
    <property type="term" value="F:translation initiation factor activity"/>
    <property type="evidence" value="ECO:0007669"/>
    <property type="project" value="UniProtKB-UniRule"/>
</dbReference>
<dbReference type="GO" id="GO:0032790">
    <property type="term" value="P:ribosome disassembly"/>
    <property type="evidence" value="ECO:0007669"/>
    <property type="project" value="TreeGrafter"/>
</dbReference>
<dbReference type="FunFam" id="3.10.20.80:FF:000001">
    <property type="entry name" value="Translation initiation factor IF-3"/>
    <property type="match status" value="1"/>
</dbReference>
<dbReference type="FunFam" id="3.30.110.10:FF:000001">
    <property type="entry name" value="Translation initiation factor IF-3"/>
    <property type="match status" value="1"/>
</dbReference>
<dbReference type="Gene3D" id="3.30.110.10">
    <property type="entry name" value="Translation initiation factor 3 (IF-3), C-terminal domain"/>
    <property type="match status" value="1"/>
</dbReference>
<dbReference type="Gene3D" id="3.10.20.80">
    <property type="entry name" value="Translation initiation factor 3 (IF-3), N-terminal domain"/>
    <property type="match status" value="1"/>
</dbReference>
<dbReference type="HAMAP" id="MF_00080">
    <property type="entry name" value="IF_3"/>
    <property type="match status" value="1"/>
</dbReference>
<dbReference type="InterPro" id="IPR036788">
    <property type="entry name" value="T_IF-3_C_sf"/>
</dbReference>
<dbReference type="InterPro" id="IPR036787">
    <property type="entry name" value="T_IF-3_N_sf"/>
</dbReference>
<dbReference type="InterPro" id="IPR019813">
    <property type="entry name" value="Translation_initiation_fac3_CS"/>
</dbReference>
<dbReference type="InterPro" id="IPR001288">
    <property type="entry name" value="Translation_initiation_fac_3"/>
</dbReference>
<dbReference type="InterPro" id="IPR019815">
    <property type="entry name" value="Translation_initiation_fac_3_C"/>
</dbReference>
<dbReference type="InterPro" id="IPR019814">
    <property type="entry name" value="Translation_initiation_fac_3_N"/>
</dbReference>
<dbReference type="NCBIfam" id="TIGR00168">
    <property type="entry name" value="infC"/>
    <property type="match status" value="1"/>
</dbReference>
<dbReference type="PANTHER" id="PTHR10938">
    <property type="entry name" value="TRANSLATION INITIATION FACTOR IF-3"/>
    <property type="match status" value="1"/>
</dbReference>
<dbReference type="PANTHER" id="PTHR10938:SF0">
    <property type="entry name" value="TRANSLATION INITIATION FACTOR IF-3, MITOCHONDRIAL"/>
    <property type="match status" value="1"/>
</dbReference>
<dbReference type="Pfam" id="PF00707">
    <property type="entry name" value="IF3_C"/>
    <property type="match status" value="1"/>
</dbReference>
<dbReference type="Pfam" id="PF05198">
    <property type="entry name" value="IF3_N"/>
    <property type="match status" value="1"/>
</dbReference>
<dbReference type="SUPFAM" id="SSF55200">
    <property type="entry name" value="Translation initiation factor IF3, C-terminal domain"/>
    <property type="match status" value="1"/>
</dbReference>
<dbReference type="SUPFAM" id="SSF54364">
    <property type="entry name" value="Translation initiation factor IF3, N-terminal domain"/>
    <property type="match status" value="1"/>
</dbReference>
<dbReference type="PROSITE" id="PS00938">
    <property type="entry name" value="IF3"/>
    <property type="match status" value="1"/>
</dbReference>
<comment type="function">
    <text evidence="1">IF-3 binds to the 30S ribosomal subunit and shifts the equilibrium between 70S ribosomes and their 50S and 30S subunits in favor of the free subunits, thus enhancing the availability of 30S subunits on which protein synthesis initiation begins.</text>
</comment>
<comment type="subunit">
    <text evidence="1">Monomer.</text>
</comment>
<comment type="subcellular location">
    <subcellularLocation>
        <location evidence="1">Cytoplasm</location>
    </subcellularLocation>
</comment>
<comment type="similarity">
    <text evidence="1">Belongs to the IF-3 family.</text>
</comment>
<accession>Q5F9U3</accession>
<protein>
    <recommendedName>
        <fullName evidence="1">Translation initiation factor IF-3</fullName>
    </recommendedName>
</protein>
<evidence type="ECO:0000255" key="1">
    <source>
        <dbReference type="HAMAP-Rule" id="MF_00080"/>
    </source>
</evidence>